<proteinExistence type="inferred from homology"/>
<gene>
    <name evidence="1" type="primary">pstB</name>
    <name type="ordered locus">OB3133</name>
</gene>
<keyword id="KW-0067">ATP-binding</keyword>
<keyword id="KW-1003">Cell membrane</keyword>
<keyword id="KW-0472">Membrane</keyword>
<keyword id="KW-0547">Nucleotide-binding</keyword>
<keyword id="KW-0592">Phosphate transport</keyword>
<keyword id="KW-1185">Reference proteome</keyword>
<keyword id="KW-1278">Translocase</keyword>
<keyword id="KW-0813">Transport</keyword>
<feature type="chain" id="PRO_0000092853" description="Phosphate import ATP-binding protein PstB">
    <location>
        <begin position="1"/>
        <end position="276"/>
    </location>
</feature>
<feature type="domain" description="ABC transporter" evidence="1">
    <location>
        <begin position="23"/>
        <end position="271"/>
    </location>
</feature>
<feature type="binding site" evidence="1">
    <location>
        <begin position="62"/>
        <end position="69"/>
    </location>
    <ligand>
        <name>ATP</name>
        <dbReference type="ChEBI" id="CHEBI:30616"/>
    </ligand>
</feature>
<comment type="function">
    <text evidence="1">Part of the ABC transporter complex PstSACB involved in phosphate import. Responsible for energy coupling to the transport system.</text>
</comment>
<comment type="catalytic activity">
    <reaction evidence="1">
        <text>phosphate(out) + ATP + H2O = ADP + 2 phosphate(in) + H(+)</text>
        <dbReference type="Rhea" id="RHEA:24440"/>
        <dbReference type="ChEBI" id="CHEBI:15377"/>
        <dbReference type="ChEBI" id="CHEBI:15378"/>
        <dbReference type="ChEBI" id="CHEBI:30616"/>
        <dbReference type="ChEBI" id="CHEBI:43474"/>
        <dbReference type="ChEBI" id="CHEBI:456216"/>
        <dbReference type="EC" id="7.3.2.1"/>
    </reaction>
</comment>
<comment type="subunit">
    <text evidence="1">The complex is composed of two ATP-binding proteins (PstB), two transmembrane proteins (PstC and PstA) and a solute-binding protein (PstS).</text>
</comment>
<comment type="subcellular location">
    <subcellularLocation>
        <location evidence="1">Cell membrane</location>
        <topology evidence="1">Peripheral membrane protein</topology>
    </subcellularLocation>
</comment>
<comment type="similarity">
    <text evidence="1">Belongs to the ABC transporter superfamily. Phosphate importer (TC 3.A.1.7) family.</text>
</comment>
<organism>
    <name type="scientific">Oceanobacillus iheyensis (strain DSM 14371 / CIP 107618 / JCM 11309 / KCTC 3954 / HTE831)</name>
    <dbReference type="NCBI Taxonomy" id="221109"/>
    <lineage>
        <taxon>Bacteria</taxon>
        <taxon>Bacillati</taxon>
        <taxon>Bacillota</taxon>
        <taxon>Bacilli</taxon>
        <taxon>Bacillales</taxon>
        <taxon>Bacillaceae</taxon>
        <taxon>Oceanobacillus</taxon>
    </lineage>
</organism>
<sequence length="276" mass="31179">MSLLTADKKVQVDINKNDKKAPVNNKNIVYDTKDLNLWYGETHALKDINLAINEKEVTAIIGPSGCGKSTYIKTLNRMVELVPTVKTTGTITYRGKNILDRSFKVEDLRTHVGMVFQKPNPFPKSIYENVAYGPKIHGIKNKKVLDEIVEKSLRGASIWDEVKDRLNENAYGLSGGQQQRLCIARCLAIEPNVILMDEPTSALDPKSTLRIEELVQELKKDYSIIIVTHNMQQAARISDKTAFFLNGEVVEFDDTDRIFTKPSDQRTEDYISGRFG</sequence>
<dbReference type="EC" id="7.3.2.1" evidence="1"/>
<dbReference type="EMBL" id="BA000028">
    <property type="protein sequence ID" value="BAC15089.1"/>
    <property type="molecule type" value="Genomic_DNA"/>
</dbReference>
<dbReference type="RefSeq" id="WP_011067530.1">
    <property type="nucleotide sequence ID" value="NC_004193.1"/>
</dbReference>
<dbReference type="SMR" id="Q8ELT4"/>
<dbReference type="STRING" id="221109.gene:10735385"/>
<dbReference type="KEGG" id="oih:OB3133"/>
<dbReference type="eggNOG" id="COG1117">
    <property type="taxonomic scope" value="Bacteria"/>
</dbReference>
<dbReference type="HOGENOM" id="CLU_000604_1_22_9"/>
<dbReference type="OrthoDB" id="1679618at2"/>
<dbReference type="PhylomeDB" id="Q8ELT4"/>
<dbReference type="Proteomes" id="UP000000822">
    <property type="component" value="Chromosome"/>
</dbReference>
<dbReference type="GO" id="GO:0005886">
    <property type="term" value="C:plasma membrane"/>
    <property type="evidence" value="ECO:0007669"/>
    <property type="project" value="UniProtKB-SubCell"/>
</dbReference>
<dbReference type="GO" id="GO:0005524">
    <property type="term" value="F:ATP binding"/>
    <property type="evidence" value="ECO:0007669"/>
    <property type="project" value="UniProtKB-KW"/>
</dbReference>
<dbReference type="GO" id="GO:0016887">
    <property type="term" value="F:ATP hydrolysis activity"/>
    <property type="evidence" value="ECO:0007669"/>
    <property type="project" value="InterPro"/>
</dbReference>
<dbReference type="GO" id="GO:0015415">
    <property type="term" value="F:ATPase-coupled phosphate ion transmembrane transporter activity"/>
    <property type="evidence" value="ECO:0007669"/>
    <property type="project" value="UniProtKB-EC"/>
</dbReference>
<dbReference type="GO" id="GO:0035435">
    <property type="term" value="P:phosphate ion transmembrane transport"/>
    <property type="evidence" value="ECO:0007669"/>
    <property type="project" value="InterPro"/>
</dbReference>
<dbReference type="CDD" id="cd03260">
    <property type="entry name" value="ABC_PstB_phosphate_transporter"/>
    <property type="match status" value="1"/>
</dbReference>
<dbReference type="FunFam" id="3.40.50.300:FF:000132">
    <property type="entry name" value="Phosphate import ATP-binding protein PstB"/>
    <property type="match status" value="1"/>
</dbReference>
<dbReference type="Gene3D" id="3.40.50.300">
    <property type="entry name" value="P-loop containing nucleotide triphosphate hydrolases"/>
    <property type="match status" value="1"/>
</dbReference>
<dbReference type="InterPro" id="IPR003593">
    <property type="entry name" value="AAA+_ATPase"/>
</dbReference>
<dbReference type="InterPro" id="IPR003439">
    <property type="entry name" value="ABC_transporter-like_ATP-bd"/>
</dbReference>
<dbReference type="InterPro" id="IPR017871">
    <property type="entry name" value="ABC_transporter-like_CS"/>
</dbReference>
<dbReference type="InterPro" id="IPR027417">
    <property type="entry name" value="P-loop_NTPase"/>
</dbReference>
<dbReference type="InterPro" id="IPR005670">
    <property type="entry name" value="PstB-like"/>
</dbReference>
<dbReference type="NCBIfam" id="TIGR00972">
    <property type="entry name" value="3a0107s01c2"/>
    <property type="match status" value="1"/>
</dbReference>
<dbReference type="PANTHER" id="PTHR43423">
    <property type="entry name" value="ABC TRANSPORTER I FAMILY MEMBER 17"/>
    <property type="match status" value="1"/>
</dbReference>
<dbReference type="PANTHER" id="PTHR43423:SF1">
    <property type="entry name" value="ABC TRANSPORTER I FAMILY MEMBER 17"/>
    <property type="match status" value="1"/>
</dbReference>
<dbReference type="Pfam" id="PF00005">
    <property type="entry name" value="ABC_tran"/>
    <property type="match status" value="1"/>
</dbReference>
<dbReference type="SMART" id="SM00382">
    <property type="entry name" value="AAA"/>
    <property type="match status" value="1"/>
</dbReference>
<dbReference type="SUPFAM" id="SSF52540">
    <property type="entry name" value="P-loop containing nucleoside triphosphate hydrolases"/>
    <property type="match status" value="1"/>
</dbReference>
<dbReference type="PROSITE" id="PS00211">
    <property type="entry name" value="ABC_TRANSPORTER_1"/>
    <property type="match status" value="1"/>
</dbReference>
<dbReference type="PROSITE" id="PS50893">
    <property type="entry name" value="ABC_TRANSPORTER_2"/>
    <property type="match status" value="1"/>
</dbReference>
<dbReference type="PROSITE" id="PS51238">
    <property type="entry name" value="PSTB"/>
    <property type="match status" value="1"/>
</dbReference>
<protein>
    <recommendedName>
        <fullName evidence="1">Phosphate import ATP-binding protein PstB</fullName>
        <ecNumber evidence="1">7.3.2.1</ecNumber>
    </recommendedName>
    <alternativeName>
        <fullName evidence="1">ABC phosphate transporter</fullName>
    </alternativeName>
    <alternativeName>
        <fullName evidence="1">Phosphate-transporting ATPase</fullName>
    </alternativeName>
</protein>
<evidence type="ECO:0000255" key="1">
    <source>
        <dbReference type="HAMAP-Rule" id="MF_01702"/>
    </source>
</evidence>
<name>PSTB_OCEIH</name>
<reference key="1">
    <citation type="journal article" date="2002" name="Nucleic Acids Res.">
        <title>Genome sequence of Oceanobacillus iheyensis isolated from the Iheya Ridge and its unexpected adaptive capabilities to extreme environments.</title>
        <authorList>
            <person name="Takami H."/>
            <person name="Takaki Y."/>
            <person name="Uchiyama I."/>
        </authorList>
    </citation>
    <scope>NUCLEOTIDE SEQUENCE [LARGE SCALE GENOMIC DNA]</scope>
    <source>
        <strain>DSM 14371 / CIP 107618 / JCM 11309 / KCTC 3954 / HTE831</strain>
    </source>
</reference>
<accession>Q8ELT4</accession>